<protein>
    <recommendedName>
        <fullName evidence="1">Aspartate 1-decarboxylase</fullName>
        <ecNumber evidence="1">4.1.1.11</ecNumber>
    </recommendedName>
    <alternativeName>
        <fullName evidence="1">Aspartate alpha-decarboxylase</fullName>
    </alternativeName>
    <component>
        <recommendedName>
            <fullName evidence="1">Aspartate 1-decarboxylase beta chain</fullName>
        </recommendedName>
    </component>
    <component>
        <recommendedName>
            <fullName evidence="1">Aspartate 1-decarboxylase alpha chain</fullName>
        </recommendedName>
    </component>
</protein>
<accession>B7HHU5</accession>
<evidence type="ECO:0000255" key="1">
    <source>
        <dbReference type="HAMAP-Rule" id="MF_00446"/>
    </source>
</evidence>
<dbReference type="EC" id="4.1.1.11" evidence="1"/>
<dbReference type="EMBL" id="CP001176">
    <property type="protein sequence ID" value="ACK61973.1"/>
    <property type="molecule type" value="Genomic_DNA"/>
</dbReference>
<dbReference type="RefSeq" id="WP_000490184.1">
    <property type="nucleotide sequence ID" value="NZ_VEHB01000003.1"/>
</dbReference>
<dbReference type="SMR" id="B7HHU5"/>
<dbReference type="KEGG" id="bcb:BCB4264_A1597"/>
<dbReference type="HOGENOM" id="CLU_115305_2_0_9"/>
<dbReference type="UniPathway" id="UPA00028">
    <property type="reaction ID" value="UER00002"/>
</dbReference>
<dbReference type="Proteomes" id="UP000007096">
    <property type="component" value="Chromosome"/>
</dbReference>
<dbReference type="GO" id="GO:0005829">
    <property type="term" value="C:cytosol"/>
    <property type="evidence" value="ECO:0007669"/>
    <property type="project" value="TreeGrafter"/>
</dbReference>
<dbReference type="GO" id="GO:0004068">
    <property type="term" value="F:aspartate 1-decarboxylase activity"/>
    <property type="evidence" value="ECO:0007669"/>
    <property type="project" value="UniProtKB-UniRule"/>
</dbReference>
<dbReference type="GO" id="GO:0006523">
    <property type="term" value="P:alanine biosynthetic process"/>
    <property type="evidence" value="ECO:0007669"/>
    <property type="project" value="InterPro"/>
</dbReference>
<dbReference type="GO" id="GO:0015940">
    <property type="term" value="P:pantothenate biosynthetic process"/>
    <property type="evidence" value="ECO:0007669"/>
    <property type="project" value="UniProtKB-UniRule"/>
</dbReference>
<dbReference type="CDD" id="cd06919">
    <property type="entry name" value="Asp_decarbox"/>
    <property type="match status" value="1"/>
</dbReference>
<dbReference type="Gene3D" id="2.40.40.20">
    <property type="match status" value="1"/>
</dbReference>
<dbReference type="HAMAP" id="MF_00446">
    <property type="entry name" value="PanD"/>
    <property type="match status" value="1"/>
</dbReference>
<dbReference type="InterPro" id="IPR009010">
    <property type="entry name" value="Asp_de-COase-like_dom_sf"/>
</dbReference>
<dbReference type="InterPro" id="IPR003190">
    <property type="entry name" value="Asp_decarbox"/>
</dbReference>
<dbReference type="NCBIfam" id="TIGR00223">
    <property type="entry name" value="panD"/>
    <property type="match status" value="1"/>
</dbReference>
<dbReference type="PANTHER" id="PTHR21012">
    <property type="entry name" value="ASPARTATE 1-DECARBOXYLASE"/>
    <property type="match status" value="1"/>
</dbReference>
<dbReference type="PANTHER" id="PTHR21012:SF0">
    <property type="entry name" value="ASPARTATE 1-DECARBOXYLASE"/>
    <property type="match status" value="1"/>
</dbReference>
<dbReference type="Pfam" id="PF02261">
    <property type="entry name" value="Asp_decarbox"/>
    <property type="match status" value="1"/>
</dbReference>
<dbReference type="PIRSF" id="PIRSF006246">
    <property type="entry name" value="Asp_decarbox"/>
    <property type="match status" value="1"/>
</dbReference>
<dbReference type="SUPFAM" id="SSF50692">
    <property type="entry name" value="ADC-like"/>
    <property type="match status" value="1"/>
</dbReference>
<keyword id="KW-0068">Autocatalytic cleavage</keyword>
<keyword id="KW-0963">Cytoplasm</keyword>
<keyword id="KW-0210">Decarboxylase</keyword>
<keyword id="KW-0456">Lyase</keyword>
<keyword id="KW-0566">Pantothenate biosynthesis</keyword>
<keyword id="KW-0670">Pyruvate</keyword>
<keyword id="KW-0704">Schiff base</keyword>
<keyword id="KW-0865">Zymogen</keyword>
<organism>
    <name type="scientific">Bacillus cereus (strain B4264)</name>
    <dbReference type="NCBI Taxonomy" id="405532"/>
    <lineage>
        <taxon>Bacteria</taxon>
        <taxon>Bacillati</taxon>
        <taxon>Bacillota</taxon>
        <taxon>Bacilli</taxon>
        <taxon>Bacillales</taxon>
        <taxon>Bacillaceae</taxon>
        <taxon>Bacillus</taxon>
        <taxon>Bacillus cereus group</taxon>
    </lineage>
</organism>
<gene>
    <name evidence="1" type="primary">panD</name>
    <name type="ordered locus">BCB4264_A1597</name>
</gene>
<sequence length="127" mass="13926">MFRTMMRAKLHRATVTEANLNYVGSITIDEDLMDAVNIVENEKVQIVNNNNGARLETYVIKGERGSGVVCLNGAAARLVQPGDKVIIICYGLVTEEEIHTQEPKIAVLDDNNQIIEMLGAEKAGTIL</sequence>
<feature type="chain" id="PRO_1000124751" description="Aspartate 1-decarboxylase beta chain" evidence="1">
    <location>
        <begin position="1"/>
        <end position="24"/>
    </location>
</feature>
<feature type="chain" id="PRO_1000124752" description="Aspartate 1-decarboxylase alpha chain" evidence="1">
    <location>
        <begin position="25"/>
        <end position="127"/>
    </location>
</feature>
<feature type="active site" description="Schiff-base intermediate with substrate; via pyruvic acid" evidence="1">
    <location>
        <position position="25"/>
    </location>
</feature>
<feature type="active site" description="Proton donor" evidence="1">
    <location>
        <position position="58"/>
    </location>
</feature>
<feature type="binding site" evidence="1">
    <location>
        <position position="57"/>
    </location>
    <ligand>
        <name>substrate</name>
    </ligand>
</feature>
<feature type="binding site" evidence="1">
    <location>
        <begin position="73"/>
        <end position="75"/>
    </location>
    <ligand>
        <name>substrate</name>
    </ligand>
</feature>
<feature type="modified residue" description="Pyruvic acid (Ser)" evidence="1">
    <location>
        <position position="25"/>
    </location>
</feature>
<name>PAND_BACC4</name>
<proteinExistence type="inferred from homology"/>
<comment type="function">
    <text evidence="1">Catalyzes the pyruvoyl-dependent decarboxylation of aspartate to produce beta-alanine.</text>
</comment>
<comment type="catalytic activity">
    <reaction evidence="1">
        <text>L-aspartate + H(+) = beta-alanine + CO2</text>
        <dbReference type="Rhea" id="RHEA:19497"/>
        <dbReference type="ChEBI" id="CHEBI:15378"/>
        <dbReference type="ChEBI" id="CHEBI:16526"/>
        <dbReference type="ChEBI" id="CHEBI:29991"/>
        <dbReference type="ChEBI" id="CHEBI:57966"/>
        <dbReference type="EC" id="4.1.1.11"/>
    </reaction>
</comment>
<comment type="cofactor">
    <cofactor evidence="1">
        <name>pyruvate</name>
        <dbReference type="ChEBI" id="CHEBI:15361"/>
    </cofactor>
    <text evidence="1">Binds 1 pyruvoyl group covalently per subunit.</text>
</comment>
<comment type="pathway">
    <text evidence="1">Cofactor biosynthesis; (R)-pantothenate biosynthesis; beta-alanine from L-aspartate: step 1/1.</text>
</comment>
<comment type="subunit">
    <text evidence="1">Heterooctamer of four alpha and four beta subunits.</text>
</comment>
<comment type="subcellular location">
    <subcellularLocation>
        <location evidence="1">Cytoplasm</location>
    </subcellularLocation>
</comment>
<comment type="PTM">
    <text evidence="1">Is synthesized initially as an inactive proenzyme, which is activated by self-cleavage at a specific serine bond to produce a beta-subunit with a hydroxyl group at its C-terminus and an alpha-subunit with a pyruvoyl group at its N-terminus.</text>
</comment>
<comment type="similarity">
    <text evidence="1">Belongs to the PanD family.</text>
</comment>
<reference key="1">
    <citation type="submission" date="2008-10" db="EMBL/GenBank/DDBJ databases">
        <title>Genome sequence of Bacillus cereus B4264.</title>
        <authorList>
            <person name="Dodson R.J."/>
            <person name="Durkin A.S."/>
            <person name="Rosovitz M.J."/>
            <person name="Rasko D.A."/>
            <person name="Hoffmaster A."/>
            <person name="Ravel J."/>
            <person name="Sutton G."/>
        </authorList>
    </citation>
    <scope>NUCLEOTIDE SEQUENCE [LARGE SCALE GENOMIC DNA]</scope>
    <source>
        <strain>B4264</strain>
    </source>
</reference>